<comment type="function">
    <text evidence="1">Catalyzes the hydrolysis of fructose 1,6-bisphosphate to fructose 6-phosphate.</text>
</comment>
<comment type="catalytic activity">
    <reaction>
        <text>beta-D-fructose 1,6-bisphosphate + H2O = beta-D-fructose 6-phosphate + phosphate</text>
        <dbReference type="Rhea" id="RHEA:11064"/>
        <dbReference type="ChEBI" id="CHEBI:15377"/>
        <dbReference type="ChEBI" id="CHEBI:32966"/>
        <dbReference type="ChEBI" id="CHEBI:43474"/>
        <dbReference type="ChEBI" id="CHEBI:57634"/>
        <dbReference type="EC" id="3.1.3.11"/>
    </reaction>
</comment>
<comment type="cofactor">
    <cofactor evidence="1">
        <name>Mn(2+)</name>
        <dbReference type="ChEBI" id="CHEBI:29035"/>
    </cofactor>
</comment>
<comment type="pathway">
    <text>Carbohydrate biosynthesis; gluconeogenesis.</text>
</comment>
<comment type="subcellular location">
    <subcellularLocation>
        <location evidence="1">Cytoplasm</location>
    </subcellularLocation>
</comment>
<comment type="similarity">
    <text evidence="3">Belongs to the FBPase class 2 family.</text>
</comment>
<comment type="sequence caution" evidence="3">
    <conflict type="erroneous initiation">
        <sequence resource="EMBL-CDS" id="ABQ72846"/>
    </conflict>
    <text>Truncated N-terminus.</text>
</comment>
<evidence type="ECO:0000250" key="1"/>
<evidence type="ECO:0000256" key="2">
    <source>
        <dbReference type="SAM" id="MobiDB-lite"/>
    </source>
</evidence>
<evidence type="ECO:0000305" key="3"/>
<gene>
    <name type="primary">glpX</name>
    <name type="ordered locus">MRA_1110</name>
</gene>
<keyword id="KW-0119">Carbohydrate metabolism</keyword>
<keyword id="KW-0963">Cytoplasm</keyword>
<keyword id="KW-0378">Hydrolase</keyword>
<keyword id="KW-0464">Manganese</keyword>
<keyword id="KW-0479">Metal-binding</keyword>
<keyword id="KW-1185">Reference proteome</keyword>
<organism>
    <name type="scientific">Mycobacterium tuberculosis (strain ATCC 25177 / H37Ra)</name>
    <dbReference type="NCBI Taxonomy" id="419947"/>
    <lineage>
        <taxon>Bacteria</taxon>
        <taxon>Bacillati</taxon>
        <taxon>Actinomycetota</taxon>
        <taxon>Actinomycetes</taxon>
        <taxon>Mycobacteriales</taxon>
        <taxon>Mycobacteriaceae</taxon>
        <taxon>Mycobacterium</taxon>
        <taxon>Mycobacterium tuberculosis complex</taxon>
    </lineage>
</organism>
<accession>A5U1E6</accession>
<sequence>MTAEGSGSSTAAVASHDPSHTRPSRREAPDRNLAMELVRVTEAGAMAAGRWVGRGDKEGGDGAAVDAMRELVNSVSMRGVVVIGEGEKDHAPMLYNGEEVGNGDGPECDFAVDPIDGTTLMSKGMTNAISVLAVADRGTMFDPSAVFYMNKIAVGPDAAHVLDITAPISENIRAVAKVKDLSVRDMTVCILDRPRHAQLIHDVRATGARIRLITDGDVAGAISACRPHSGTDLLAGIGGTPEGIIAAAAIRCMGGAIQAQLAPRDDAERRKALEAGYDLNQVLTTEDLVSGENVFFCATGVTDGDLLKGVRYYPGGCTTHSIVMRSKSGTVRMIEAYHRLSKLNEYSAIDFTGDSSAVYPLP</sequence>
<protein>
    <recommendedName>
        <fullName>Fructose-1,6-bisphosphatase class 2</fullName>
        <shortName>FBPase class 2</shortName>
        <ecNumber>3.1.3.11</ecNumber>
    </recommendedName>
    <alternativeName>
        <fullName>D-fructose-1,6-bisphosphate 1-phosphohydrolase class 2</fullName>
    </alternativeName>
</protein>
<reference key="1">
    <citation type="journal article" date="2008" name="PLoS ONE">
        <title>Genetic basis of virulence attenuation revealed by comparative genomic analysis of Mycobacterium tuberculosis strain H37Ra versus H37Rv.</title>
        <authorList>
            <person name="Zheng H."/>
            <person name="Lu L."/>
            <person name="Wang B."/>
            <person name="Pu S."/>
            <person name="Zhang X."/>
            <person name="Zhu G."/>
            <person name="Shi W."/>
            <person name="Zhang L."/>
            <person name="Wang H."/>
            <person name="Wang S."/>
            <person name="Zhao G."/>
            <person name="Zhang Y."/>
        </authorList>
    </citation>
    <scope>NUCLEOTIDE SEQUENCE [LARGE SCALE GENOMIC DNA]</scope>
    <source>
        <strain>ATCC 25177 / H37Ra</strain>
    </source>
</reference>
<dbReference type="EC" id="3.1.3.11"/>
<dbReference type="EMBL" id="CP000611">
    <property type="protein sequence ID" value="ABQ72846.1"/>
    <property type="status" value="ALT_INIT"/>
    <property type="molecule type" value="Genomic_DNA"/>
</dbReference>
<dbReference type="RefSeq" id="WP_003898726.1">
    <property type="nucleotide sequence ID" value="NZ_CP016972.1"/>
</dbReference>
<dbReference type="SMR" id="A5U1E6"/>
<dbReference type="GeneID" id="45425073"/>
<dbReference type="KEGG" id="mra:MRA_1110"/>
<dbReference type="eggNOG" id="COG1494">
    <property type="taxonomic scope" value="Bacteria"/>
</dbReference>
<dbReference type="HOGENOM" id="CLU_054938_0_0_11"/>
<dbReference type="UniPathway" id="UPA00138"/>
<dbReference type="Proteomes" id="UP000001988">
    <property type="component" value="Chromosome"/>
</dbReference>
<dbReference type="GO" id="GO:0005829">
    <property type="term" value="C:cytosol"/>
    <property type="evidence" value="ECO:0007669"/>
    <property type="project" value="TreeGrafter"/>
</dbReference>
<dbReference type="GO" id="GO:0042132">
    <property type="term" value="F:fructose 1,6-bisphosphate 1-phosphatase activity"/>
    <property type="evidence" value="ECO:0007669"/>
    <property type="project" value="UniProtKB-EC"/>
</dbReference>
<dbReference type="GO" id="GO:0046872">
    <property type="term" value="F:metal ion binding"/>
    <property type="evidence" value="ECO:0007669"/>
    <property type="project" value="UniProtKB-KW"/>
</dbReference>
<dbReference type="GO" id="GO:0030388">
    <property type="term" value="P:fructose 1,6-bisphosphate metabolic process"/>
    <property type="evidence" value="ECO:0007669"/>
    <property type="project" value="TreeGrafter"/>
</dbReference>
<dbReference type="GO" id="GO:0006094">
    <property type="term" value="P:gluconeogenesis"/>
    <property type="evidence" value="ECO:0007669"/>
    <property type="project" value="UniProtKB-UniPathway"/>
</dbReference>
<dbReference type="GO" id="GO:0006071">
    <property type="term" value="P:glycerol metabolic process"/>
    <property type="evidence" value="ECO:0007669"/>
    <property type="project" value="InterPro"/>
</dbReference>
<dbReference type="CDD" id="cd01516">
    <property type="entry name" value="FBPase_glpX"/>
    <property type="match status" value="1"/>
</dbReference>
<dbReference type="FunFam" id="3.40.190.90:FF:000001">
    <property type="entry name" value="Fructose-1,6-bisphosphatase"/>
    <property type="match status" value="1"/>
</dbReference>
<dbReference type="Gene3D" id="3.40.190.90">
    <property type="match status" value="1"/>
</dbReference>
<dbReference type="Gene3D" id="3.30.540.10">
    <property type="entry name" value="Fructose-1,6-Bisphosphatase, subunit A, domain 1"/>
    <property type="match status" value="1"/>
</dbReference>
<dbReference type="InterPro" id="IPR004464">
    <property type="entry name" value="FBPase_class-2/SBPase"/>
</dbReference>
<dbReference type="NCBIfam" id="TIGR00330">
    <property type="entry name" value="glpX"/>
    <property type="match status" value="1"/>
</dbReference>
<dbReference type="PANTHER" id="PTHR30447:SF0">
    <property type="entry name" value="FRUCTOSE-1,6-BISPHOSPHATASE 1 CLASS 2-RELATED"/>
    <property type="match status" value="1"/>
</dbReference>
<dbReference type="PANTHER" id="PTHR30447">
    <property type="entry name" value="FRUCTOSE-1,6-BISPHOSPHATASE CLASS 2"/>
    <property type="match status" value="1"/>
</dbReference>
<dbReference type="Pfam" id="PF03320">
    <property type="entry name" value="FBPase_glpX"/>
    <property type="match status" value="1"/>
</dbReference>
<dbReference type="PIRSF" id="PIRSF004532">
    <property type="entry name" value="GlpX"/>
    <property type="match status" value="1"/>
</dbReference>
<dbReference type="SUPFAM" id="SSF56655">
    <property type="entry name" value="Carbohydrate phosphatase"/>
    <property type="match status" value="1"/>
</dbReference>
<proteinExistence type="inferred from homology"/>
<name>GLPX_MYCTA</name>
<feature type="chain" id="PRO_0000403679" description="Fructose-1,6-bisphosphatase class 2">
    <location>
        <begin position="1"/>
        <end position="362"/>
    </location>
</feature>
<feature type="region of interest" description="Disordered" evidence="2">
    <location>
        <begin position="1"/>
        <end position="32"/>
    </location>
</feature>
<feature type="compositionally biased region" description="Polar residues" evidence="2">
    <location>
        <begin position="1"/>
        <end position="12"/>
    </location>
</feature>
<feature type="compositionally biased region" description="Basic and acidic residues" evidence="2">
    <location>
        <begin position="17"/>
        <end position="30"/>
    </location>
</feature>
<feature type="binding site" evidence="1">
    <location>
        <position position="61"/>
    </location>
    <ligand>
        <name>Mn(2+)</name>
        <dbReference type="ChEBI" id="CHEBI:29035"/>
        <label>1</label>
    </ligand>
</feature>
<feature type="binding site" evidence="1">
    <location>
        <position position="85"/>
    </location>
    <ligand>
        <name>Mn(2+)</name>
        <dbReference type="ChEBI" id="CHEBI:29035"/>
        <label>1</label>
    </ligand>
</feature>
<feature type="binding site" evidence="1">
    <location>
        <position position="113"/>
    </location>
    <ligand>
        <name>Mn(2+)</name>
        <dbReference type="ChEBI" id="CHEBI:29035"/>
        <label>2</label>
    </ligand>
</feature>
<feature type="binding site" evidence="1">
    <location>
        <begin position="116"/>
        <end position="118"/>
    </location>
    <ligand>
        <name>substrate</name>
    </ligand>
</feature>
<feature type="binding site" evidence="1">
    <location>
        <position position="116"/>
    </location>
    <ligand>
        <name>Mn(2+)</name>
        <dbReference type="ChEBI" id="CHEBI:29035"/>
        <label>2</label>
    </ligand>
</feature>
<feature type="binding site" evidence="1">
    <location>
        <position position="148"/>
    </location>
    <ligand>
        <name>substrate</name>
    </ligand>
</feature>
<feature type="binding site" evidence="1">
    <location>
        <begin position="193"/>
        <end position="195"/>
    </location>
    <ligand>
        <name>substrate</name>
    </ligand>
</feature>
<feature type="binding site" evidence="1">
    <location>
        <begin position="215"/>
        <end position="217"/>
    </location>
    <ligand>
        <name>substrate</name>
    </ligand>
</feature>
<feature type="binding site" evidence="1">
    <location>
        <position position="239"/>
    </location>
    <ligand>
        <name>substrate</name>
    </ligand>
</feature>
<feature type="binding site" evidence="1">
    <location>
        <position position="242"/>
    </location>
    <ligand>
        <name>Mn(2+)</name>
        <dbReference type="ChEBI" id="CHEBI:29035"/>
        <label>2</label>
    </ligand>
</feature>